<reference key="1">
    <citation type="submission" date="1995-03" db="EMBL/GenBank/DDBJ databases">
        <title>Isolation of nifH and part of nifD by modified capture PCR from a natural population of the marine cyanobacterium Trichodesmium thiebautii.</title>
        <authorList>
            <person name="Sroga G.E."/>
            <person name="Landegren U."/>
            <person name="Bergman B."/>
            <person name="Lagerstrom-Fermer M."/>
        </authorList>
    </citation>
    <scope>NUCLEOTIDE SEQUENCE [GENOMIC DNA]</scope>
</reference>
<reference key="2">
    <citation type="journal article" date="1989" name="Appl. Environ. Microbiol.">
        <title>Use of degenerate oligonucleotides for amplification of the nifH gene from the marine cyanobacterium Trichodesmium thiebautii.</title>
        <authorList>
            <person name="Zehr J.P."/>
            <person name="McReynolds L.A."/>
        </authorList>
    </citation>
    <scope>NUCLEOTIDE SEQUENCE [GENOMIC DNA] OF 38-156</scope>
</reference>
<organism>
    <name type="scientific">Trichodesmium thiebautii</name>
    <dbReference type="NCBI Taxonomy" id="1208"/>
    <lineage>
        <taxon>Bacteria</taxon>
        <taxon>Bacillati</taxon>
        <taxon>Cyanobacteriota</taxon>
        <taxon>Cyanophyceae</taxon>
        <taxon>Oscillatoriophycideae</taxon>
        <taxon>Oscillatoriales</taxon>
        <taxon>Microcoleaceae</taxon>
        <taxon>Trichodesmium</taxon>
    </lineage>
</organism>
<proteinExistence type="inferred from homology"/>
<feature type="chain" id="PRO_0000139534" description="Nitrogenase iron protein">
    <location>
        <begin position="1"/>
        <end position="294"/>
    </location>
</feature>
<feature type="binding site" evidence="2">
    <location>
        <begin position="8"/>
        <end position="15"/>
    </location>
    <ligand>
        <name>ATP</name>
        <dbReference type="ChEBI" id="CHEBI:30616"/>
    </ligand>
</feature>
<feature type="binding site" evidence="1">
    <location>
        <position position="97"/>
    </location>
    <ligand>
        <name>[4Fe-4S] cluster</name>
        <dbReference type="ChEBI" id="CHEBI:49883"/>
        <note>ligand shared between dimeric partners</note>
    </ligand>
</feature>
<feature type="binding site" evidence="1">
    <location>
        <position position="131"/>
    </location>
    <ligand>
        <name>[4Fe-4S] cluster</name>
        <dbReference type="ChEBI" id="CHEBI:49883"/>
        <note>ligand shared between dimeric partners</note>
    </ligand>
</feature>
<feature type="modified residue" description="ADP-ribosylarginine; by dinitrogenase reductase ADP-ribosyltransferase" evidence="1">
    <location>
        <position position="100"/>
    </location>
</feature>
<feature type="sequence conflict" description="In Ref. 2; AAA27368." evidence="3" ref="2">
    <original>D</original>
    <variation>N</variation>
    <location>
        <position position="50"/>
    </location>
</feature>
<evidence type="ECO:0000250" key="1"/>
<evidence type="ECO:0000255" key="2"/>
<evidence type="ECO:0000305" key="3"/>
<protein>
    <recommendedName>
        <fullName>Nitrogenase iron protein</fullName>
        <ecNumber>1.18.6.1</ecNumber>
    </recommendedName>
    <alternativeName>
        <fullName>Nitrogenase Fe protein</fullName>
    </alternativeName>
    <alternativeName>
        <fullName>Nitrogenase component II</fullName>
    </alternativeName>
    <alternativeName>
        <fullName>Nitrogenase reductase</fullName>
    </alternativeName>
</protein>
<comment type="function">
    <text evidence="1">The key enzymatic reactions in nitrogen fixation are catalyzed by the nitrogenase complex, which has 2 components: the iron protein and the molybdenum-iron protein.</text>
</comment>
<comment type="catalytic activity">
    <reaction>
        <text>N2 + 8 reduced [2Fe-2S]-[ferredoxin] + 16 ATP + 16 H2O = H2 + 8 oxidized [2Fe-2S]-[ferredoxin] + 2 NH4(+) + 16 ADP + 16 phosphate + 6 H(+)</text>
        <dbReference type="Rhea" id="RHEA:21448"/>
        <dbReference type="Rhea" id="RHEA-COMP:10000"/>
        <dbReference type="Rhea" id="RHEA-COMP:10001"/>
        <dbReference type="ChEBI" id="CHEBI:15377"/>
        <dbReference type="ChEBI" id="CHEBI:15378"/>
        <dbReference type="ChEBI" id="CHEBI:17997"/>
        <dbReference type="ChEBI" id="CHEBI:18276"/>
        <dbReference type="ChEBI" id="CHEBI:28938"/>
        <dbReference type="ChEBI" id="CHEBI:30616"/>
        <dbReference type="ChEBI" id="CHEBI:33737"/>
        <dbReference type="ChEBI" id="CHEBI:33738"/>
        <dbReference type="ChEBI" id="CHEBI:43474"/>
        <dbReference type="ChEBI" id="CHEBI:456216"/>
        <dbReference type="EC" id="1.18.6.1"/>
    </reaction>
</comment>
<comment type="cofactor">
    <cofactor evidence="1">
        <name>[4Fe-4S] cluster</name>
        <dbReference type="ChEBI" id="CHEBI:49883"/>
    </cofactor>
    <text evidence="1">Binds 1 [4Fe-4S] cluster per dimer.</text>
</comment>
<comment type="subunit">
    <text evidence="1">Homodimer.</text>
</comment>
<comment type="PTM">
    <text evidence="1">The reversible ADP-ribosylation of Arg-100 inactivates the nitrogenase reductase and regulates nitrogenase activity.</text>
</comment>
<comment type="similarity">
    <text evidence="3">Belongs to the NifH/BchL/ChlL family.</text>
</comment>
<keyword id="KW-0004">4Fe-4S</keyword>
<keyword id="KW-0013">ADP-ribosylation</keyword>
<keyword id="KW-0067">ATP-binding</keyword>
<keyword id="KW-0408">Iron</keyword>
<keyword id="KW-0411">Iron-sulfur</keyword>
<keyword id="KW-0479">Metal-binding</keyword>
<keyword id="KW-0535">Nitrogen fixation</keyword>
<keyword id="KW-0547">Nucleotide-binding</keyword>
<keyword id="KW-0560">Oxidoreductase</keyword>
<sequence length="294" mass="32276">MRQIAFYGKGGIGKSTTSQNTLAAMANRHGQRIMIVGCDPKADSTRLILDAKAQTTVLHVAAELGAVEDVELDQVLKPGFGGIKCVESGGPEPGVGCAGRGIITAINFLEEEGAYTDLDFVSYDVLGDVVCGGFAMPIRENKAQEIYIVCSGEMMAMYAANNIARGVLKYAHAGGVRLGGLICNSRKVDRETELIENLAARLNTQMIHFVPRDNVVQRAEIRRLTVEQYAPEDNQAQEYNKLAEKIINNEKLTIPTPLEMDELEELLIEFGLLAATKKIVRNKLQHKMQQQQKK</sequence>
<accession>P26254</accession>
<accession>Q56373</accession>
<gene>
    <name type="primary">nifH</name>
</gene>
<name>NIFH_TRITH</name>
<dbReference type="EC" id="1.18.6.1"/>
<dbReference type="EMBL" id="U23507">
    <property type="protein sequence ID" value="AAA77022.1"/>
    <property type="molecule type" value="Genomic_DNA"/>
</dbReference>
<dbReference type="EMBL" id="M29709">
    <property type="protein sequence ID" value="AAA27368.1"/>
    <property type="molecule type" value="Genomic_DNA"/>
</dbReference>
<dbReference type="PIR" id="A43635">
    <property type="entry name" value="A43635"/>
</dbReference>
<dbReference type="SMR" id="P26254"/>
<dbReference type="GO" id="GO:0051539">
    <property type="term" value="F:4 iron, 4 sulfur cluster binding"/>
    <property type="evidence" value="ECO:0007669"/>
    <property type="project" value="UniProtKB-KW"/>
</dbReference>
<dbReference type="GO" id="GO:0005524">
    <property type="term" value="F:ATP binding"/>
    <property type="evidence" value="ECO:0007669"/>
    <property type="project" value="UniProtKB-UniRule"/>
</dbReference>
<dbReference type="GO" id="GO:0046872">
    <property type="term" value="F:metal ion binding"/>
    <property type="evidence" value="ECO:0007669"/>
    <property type="project" value="UniProtKB-KW"/>
</dbReference>
<dbReference type="GO" id="GO:0016163">
    <property type="term" value="F:nitrogenase activity"/>
    <property type="evidence" value="ECO:0007669"/>
    <property type="project" value="UniProtKB-UniRule"/>
</dbReference>
<dbReference type="GO" id="GO:0009399">
    <property type="term" value="P:nitrogen fixation"/>
    <property type="evidence" value="ECO:0007669"/>
    <property type="project" value="UniProtKB-UniRule"/>
</dbReference>
<dbReference type="CDD" id="cd02040">
    <property type="entry name" value="NifH"/>
    <property type="match status" value="1"/>
</dbReference>
<dbReference type="FunFam" id="3.40.50.300:FF:001379">
    <property type="entry name" value="Nitrogenase iron protein 1"/>
    <property type="match status" value="1"/>
</dbReference>
<dbReference type="Gene3D" id="3.40.50.300">
    <property type="entry name" value="P-loop containing nucleotide triphosphate hydrolases"/>
    <property type="match status" value="1"/>
</dbReference>
<dbReference type="HAMAP" id="MF_00533">
    <property type="entry name" value="NifH"/>
    <property type="match status" value="1"/>
</dbReference>
<dbReference type="InterPro" id="IPR030655">
    <property type="entry name" value="NifH/chlL_CS"/>
</dbReference>
<dbReference type="InterPro" id="IPR000392">
    <property type="entry name" value="NifH/frxC"/>
</dbReference>
<dbReference type="InterPro" id="IPR005977">
    <property type="entry name" value="Nitrogenase_Fe_NifH"/>
</dbReference>
<dbReference type="InterPro" id="IPR027417">
    <property type="entry name" value="P-loop_NTPase"/>
</dbReference>
<dbReference type="NCBIfam" id="TIGR01287">
    <property type="entry name" value="nifH"/>
    <property type="match status" value="1"/>
</dbReference>
<dbReference type="PANTHER" id="PTHR42864">
    <property type="entry name" value="LIGHT-INDEPENDENT PROTOCHLOROPHYLLIDE REDUCTASE IRON-SULFUR ATP-BINDING PROTEIN"/>
    <property type="match status" value="1"/>
</dbReference>
<dbReference type="PANTHER" id="PTHR42864:SF2">
    <property type="entry name" value="LIGHT-INDEPENDENT PROTOCHLOROPHYLLIDE REDUCTASE IRON-SULFUR ATP-BINDING PROTEIN"/>
    <property type="match status" value="1"/>
</dbReference>
<dbReference type="Pfam" id="PF00142">
    <property type="entry name" value="Fer4_NifH"/>
    <property type="match status" value="1"/>
</dbReference>
<dbReference type="PIRSF" id="PIRSF000363">
    <property type="entry name" value="Nitrogenase_iron"/>
    <property type="match status" value="1"/>
</dbReference>
<dbReference type="PRINTS" id="PR00091">
    <property type="entry name" value="NITROGNASEII"/>
</dbReference>
<dbReference type="SUPFAM" id="SSF52540">
    <property type="entry name" value="P-loop containing nucleoside triphosphate hydrolases"/>
    <property type="match status" value="1"/>
</dbReference>
<dbReference type="PROSITE" id="PS00746">
    <property type="entry name" value="NIFH_FRXC_1"/>
    <property type="match status" value="1"/>
</dbReference>
<dbReference type="PROSITE" id="PS00692">
    <property type="entry name" value="NIFH_FRXC_2"/>
    <property type="match status" value="1"/>
</dbReference>
<dbReference type="PROSITE" id="PS51026">
    <property type="entry name" value="NIFH_FRXC_3"/>
    <property type="match status" value="1"/>
</dbReference>